<gene>
    <name type="primary">ooxA</name>
</gene>
<geneLocation type="plasmid">
    <name>pTiAch5</name>
</geneLocation>
<feature type="chain" id="PRO_0000058052" description="Opine oxidase subunit A">
    <location>
        <begin position="1"/>
        <end position="503"/>
    </location>
</feature>
<dbReference type="EC" id="1.-.-.-"/>
<dbReference type="EMBL" id="Z30328">
    <property type="protein sequence ID" value="CAA82988.1"/>
    <property type="molecule type" value="Genomic_DNA"/>
</dbReference>
<dbReference type="PIR" id="S55589">
    <property type="entry name" value="S55589"/>
</dbReference>
<dbReference type="RefSeq" id="NP_059709.1">
    <property type="nucleotide sequence ID" value="NC_002377.1"/>
</dbReference>
<dbReference type="SMR" id="Q59160"/>
<dbReference type="BioCyc" id="MetaCyc:MONOMER-11548"/>
<dbReference type="UniPathway" id="UPA00737"/>
<dbReference type="GO" id="GO:0016491">
    <property type="term" value="F:oxidoreductase activity"/>
    <property type="evidence" value="ECO:0007669"/>
    <property type="project" value="UniProtKB-KW"/>
</dbReference>
<dbReference type="CDD" id="cd19946">
    <property type="entry name" value="GlpA-like_Fer2_BFD-like"/>
    <property type="match status" value="1"/>
</dbReference>
<dbReference type="Gene3D" id="1.10.10.1100">
    <property type="entry name" value="BFD-like [2Fe-2S]-binding domain"/>
    <property type="match status" value="1"/>
</dbReference>
<dbReference type="Gene3D" id="3.50.50.60">
    <property type="entry name" value="FAD/NAD(P)-binding domain"/>
    <property type="match status" value="2"/>
</dbReference>
<dbReference type="InterPro" id="IPR041854">
    <property type="entry name" value="BFD-like_2Fe2S-bd_dom_sf"/>
</dbReference>
<dbReference type="InterPro" id="IPR036188">
    <property type="entry name" value="FAD/NAD-bd_sf"/>
</dbReference>
<dbReference type="InterPro" id="IPR023753">
    <property type="entry name" value="FAD/NAD-binding_dom"/>
</dbReference>
<dbReference type="InterPro" id="IPR051691">
    <property type="entry name" value="Metab_Enz_Cyan_OpOx_G3PDH"/>
</dbReference>
<dbReference type="InterPro" id="IPR017224">
    <property type="entry name" value="Opine_Oxase_asu/HCN_bsu"/>
</dbReference>
<dbReference type="InterPro" id="IPR041117">
    <property type="entry name" value="SoxA_A3"/>
</dbReference>
<dbReference type="PANTHER" id="PTHR42949">
    <property type="entry name" value="ANAEROBIC GLYCEROL-3-PHOSPHATE DEHYDROGENASE SUBUNIT B"/>
    <property type="match status" value="1"/>
</dbReference>
<dbReference type="PANTHER" id="PTHR42949:SF3">
    <property type="entry name" value="ANAEROBIC GLYCEROL-3-PHOSPHATE DEHYDROGENASE SUBUNIT B"/>
    <property type="match status" value="1"/>
</dbReference>
<dbReference type="Pfam" id="PF07992">
    <property type="entry name" value="Pyr_redox_2"/>
    <property type="match status" value="1"/>
</dbReference>
<dbReference type="Pfam" id="PF17806">
    <property type="entry name" value="SO_alpha_A3"/>
    <property type="match status" value="1"/>
</dbReference>
<dbReference type="PIRSF" id="PIRSF037495">
    <property type="entry name" value="Opine_OX_OoxA/HcnB"/>
    <property type="match status" value="1"/>
</dbReference>
<dbReference type="PRINTS" id="PR00368">
    <property type="entry name" value="FADPNR"/>
</dbReference>
<dbReference type="PRINTS" id="PR00469">
    <property type="entry name" value="PNDRDTASEII"/>
</dbReference>
<dbReference type="SUPFAM" id="SSF51905">
    <property type="entry name" value="FAD/NAD(P)-binding domain"/>
    <property type="match status" value="1"/>
</dbReference>
<reference key="1">
    <citation type="journal article" date="1994" name="J. Bacteriol.">
        <title>Octopine and nopaline oxidases from Ti plasmids of Agrobacterium tumefaciens: molecular analysis, relationship, and functional characterization.</title>
        <authorList>
            <person name="Zanker H."/>
            <person name="Lurz G."/>
            <person name="Langridge U."/>
            <person name="Langridge P."/>
            <person name="Kreusch D."/>
            <person name="Schroeder J."/>
        </authorList>
    </citation>
    <scope>NUCLEOTIDE SEQUENCE [GENOMIC DNA]</scope>
</reference>
<organism>
    <name type="scientific">Agrobacterium tumefaciens (strain Ach5)</name>
    <dbReference type="NCBI Taxonomy" id="176298"/>
    <lineage>
        <taxon>Bacteria</taxon>
        <taxon>Pseudomonadati</taxon>
        <taxon>Pseudomonadota</taxon>
        <taxon>Alphaproteobacteria</taxon>
        <taxon>Hyphomicrobiales</taxon>
        <taxon>Rhizobiaceae</taxon>
        <taxon>Rhizobium/Agrobacterium group</taxon>
        <taxon>Agrobacterium</taxon>
        <taxon>Agrobacterium tumefaciens complex</taxon>
    </lineage>
</organism>
<evidence type="ECO:0000305" key="1"/>
<accession>Q59160</accession>
<keyword id="KW-0560">Oxidoreductase</keyword>
<keyword id="KW-0614">Plasmid</keyword>
<protein>
    <recommendedName>
        <fullName>Opine oxidase subunit A</fullName>
        <ecNumber>1.-.-.-</ecNumber>
    </recommendedName>
    <alternativeName>
        <fullName>Octopine oxidase subunit A</fullName>
    </alternativeName>
</protein>
<comment type="function">
    <text>Oxidative cleavage of octopine into L-arginine and pyruvate.</text>
</comment>
<comment type="pathway">
    <text>Opine metabolism; octopine degradation.</text>
</comment>
<comment type="subunit">
    <text>Heterodimer of a subunit A and a subunit B.</text>
</comment>
<comment type="similarity">
    <text evidence="1">To T-protein and to dimethylglycine dehydrogenase.</text>
</comment>
<sequence>MTLREVSVATDLSDFYDLLVIGAGPAGMAAAVEASASGARVAVLDENPRPGGQIYREITRNSPDRRTYLGPDYWKGQPLAEAFCLSNVDYASRATVWSLETRDKTAGQARNVVGVTVAGSARMVETNAVVLATGAQERPMPVPGWTLPGVMTAGAAQIALKAAGAMPAGPVVLIGCGPLLYLLASQLVDAGVPDLTVLDTAQSPFRGAVLRHMPEFLLSPYVLKGIGLLLKVRRHAQVVYGVRSIAIIGSQHAESVRYAVGQGERSIPAKSVLLHQGVIPSTSLSNAAGCELQWNDEQRAFQPVTDHDGRTTKAGIYVAGDGAGIAGAQAAEVSGRLAALAALADLKLVSTQTSSTSIKSRHAQARRFLRGRAFLDALYTPRQSFLAPSAPETIVCRCEEITVRKLREAIALGPPGPNQLKTFVRCGMGQCQGRLCAATVTEIMVAEERKVSPADVGTYRLRSPVKPVRLAELAHLPHTARALKAVTGRDPVDHDTTETGHIL</sequence>
<proteinExistence type="predicted"/>
<name>OOXA_AGRT4</name>